<comment type="alternative products">
    <event type="alternative splicing"/>
    <isoform>
        <id>Q5T953-1</id>
        <name>1</name>
        <sequence type="displayed"/>
    </isoform>
    <isoform>
        <id>Q5T953-2</id>
        <name>2</name>
        <sequence type="described" ref="VSP_033726 VSP_033727"/>
    </isoform>
</comment>
<comment type="similarity">
    <text evidence="3">Belongs to the IER family.</text>
</comment>
<sequence>MECALDAQSLISISLRKIHSSRTQRGGIKLHKNLLVSYVLRNARQLYLSERYAELYRRQQQQQQQQPPHHQHQHLAYAAPGMPASAADFGPLQLGGGGDAEAREPAARHQLHQLHQLHQLHLQQQLHQHQHPAPRGCAAAAAAGAPAGGAGALSELPGCAALQPPHGAPHRGQPLEPLQPGPAPLPLPLPPPAPAALCPRDPRAPAACSAPPGAAPPAAAASPPASPAPASSPGFYRGAYPTPSDFGLHCSSQTTVLDLDTHVVTTVENGYLHQDCCASAHCPCCGQGAPGPGLASAAGCKRKYYPGQEEEEDDEEDAGGLGAEPPGGAPFAPCKRARFEDFCPDSSPDASNISNLISIFGSGFSGLVSRQPDSSEQPPPLNGQLCAKQALASLGAWTRAIVAF</sequence>
<dbReference type="EMBL" id="AL158151">
    <property type="status" value="NOT_ANNOTATED_CDS"/>
    <property type="molecule type" value="Genomic_DNA"/>
</dbReference>
<dbReference type="EMBL" id="CH471090">
    <property type="protein sequence ID" value="EAW87886.1"/>
    <property type="molecule type" value="Genomic_DNA"/>
</dbReference>
<dbReference type="EMBL" id="BC064028">
    <property type="protein sequence ID" value="AAH64028.1"/>
    <property type="molecule type" value="mRNA"/>
</dbReference>
<dbReference type="CCDS" id="CCDS43888.1">
    <molecule id="Q5T953-1"/>
</dbReference>
<dbReference type="RefSeq" id="NP_982258.2">
    <molecule id="Q5T953-1"/>
    <property type="nucleotide sequence ID" value="NM_203434.3"/>
</dbReference>
<dbReference type="SMR" id="Q5T953"/>
<dbReference type="BioGRID" id="133275">
    <property type="interactions" value="7"/>
</dbReference>
<dbReference type="FunCoup" id="Q5T953">
    <property type="interactions" value="41"/>
</dbReference>
<dbReference type="IntAct" id="Q5T953">
    <property type="interactions" value="3"/>
</dbReference>
<dbReference type="STRING" id="9606.ENSP00000361569"/>
<dbReference type="GlyGen" id="Q5T953">
    <property type="glycosylation" value="1 site"/>
</dbReference>
<dbReference type="iPTMnet" id="Q5T953"/>
<dbReference type="PhosphoSitePlus" id="Q5T953"/>
<dbReference type="BioMuta" id="IER5L"/>
<dbReference type="DMDM" id="74745628"/>
<dbReference type="MassIVE" id="Q5T953"/>
<dbReference type="PaxDb" id="9606-ENSP00000361569"/>
<dbReference type="PeptideAtlas" id="Q5T953"/>
<dbReference type="ProteomicsDB" id="64775">
    <molecule id="Q5T953-1"/>
</dbReference>
<dbReference type="ProteomicsDB" id="64776">
    <molecule id="Q5T953-2"/>
</dbReference>
<dbReference type="Antibodypedia" id="7862">
    <property type="antibodies" value="41 antibodies from 13 providers"/>
</dbReference>
<dbReference type="DNASU" id="389792"/>
<dbReference type="Ensembl" id="ENST00000372491.4">
    <molecule id="Q5T953-1"/>
    <property type="protein sequence ID" value="ENSP00000361569.2"/>
    <property type="gene ID" value="ENSG00000188483.8"/>
</dbReference>
<dbReference type="GeneID" id="389792"/>
<dbReference type="KEGG" id="hsa:389792"/>
<dbReference type="MANE-Select" id="ENST00000372491.4">
    <property type="protein sequence ID" value="ENSP00000361569.2"/>
    <property type="RefSeq nucleotide sequence ID" value="NM_203434.3"/>
    <property type="RefSeq protein sequence ID" value="NP_982258.2"/>
</dbReference>
<dbReference type="UCSC" id="uc010myt.2">
    <molecule id="Q5T953-1"/>
    <property type="organism name" value="human"/>
</dbReference>
<dbReference type="AGR" id="HGNC:23679"/>
<dbReference type="CTD" id="389792"/>
<dbReference type="DisGeNET" id="389792"/>
<dbReference type="GeneCards" id="IER5L"/>
<dbReference type="HGNC" id="HGNC:23679">
    <property type="gene designation" value="IER5L"/>
</dbReference>
<dbReference type="HPA" id="ENSG00000188483">
    <property type="expression patterns" value="Low tissue specificity"/>
</dbReference>
<dbReference type="neXtProt" id="NX_Q5T953"/>
<dbReference type="OpenTargets" id="ENSG00000188483"/>
<dbReference type="PharmGKB" id="PA134879111"/>
<dbReference type="VEuPathDB" id="HostDB:ENSG00000188483"/>
<dbReference type="eggNOG" id="ENOG502QUU4">
    <property type="taxonomic scope" value="Eukaryota"/>
</dbReference>
<dbReference type="GeneTree" id="ENSGT00900000141021"/>
<dbReference type="HOGENOM" id="CLU_057338_1_1_1"/>
<dbReference type="InParanoid" id="Q5T953"/>
<dbReference type="OMA" id="QDCCCDA"/>
<dbReference type="OrthoDB" id="6358394at2759"/>
<dbReference type="PAN-GO" id="Q5T953">
    <property type="GO annotations" value="0 GO annotations based on evolutionary models"/>
</dbReference>
<dbReference type="PhylomeDB" id="Q5T953"/>
<dbReference type="TreeFam" id="TF331376"/>
<dbReference type="PathwayCommons" id="Q5T953"/>
<dbReference type="BioGRID-ORCS" id="389792">
    <property type="hits" value="30 hits in 1160 CRISPR screens"/>
</dbReference>
<dbReference type="ChiTaRS" id="IER5L">
    <property type="organism name" value="human"/>
</dbReference>
<dbReference type="GenomeRNAi" id="389792"/>
<dbReference type="Pharos" id="Q5T953">
    <property type="development level" value="Tdark"/>
</dbReference>
<dbReference type="PRO" id="PR:Q5T953"/>
<dbReference type="Proteomes" id="UP000005640">
    <property type="component" value="Chromosome 9"/>
</dbReference>
<dbReference type="RNAct" id="Q5T953">
    <property type="molecule type" value="protein"/>
</dbReference>
<dbReference type="Bgee" id="ENSG00000188483">
    <property type="expression patterns" value="Expressed in vena cava and 152 other cell types or tissues"/>
</dbReference>
<dbReference type="InterPro" id="IPR008653">
    <property type="entry name" value="IER"/>
</dbReference>
<dbReference type="PANTHER" id="PTHR15895">
    <property type="entry name" value="IMMEDIATE EARLY RESPONSE GENE"/>
    <property type="match status" value="1"/>
</dbReference>
<dbReference type="Pfam" id="PF05760">
    <property type="entry name" value="IER"/>
    <property type="match status" value="1"/>
</dbReference>
<accession>Q5T953</accession>
<accession>Q6P3E2</accession>
<proteinExistence type="evidence at protein level"/>
<protein>
    <recommendedName>
        <fullName>Immediate early response gene 5-like protein</fullName>
    </recommendedName>
</protein>
<feature type="chain" id="PRO_0000334656" description="Immediate early response gene 5-like protein">
    <location>
        <begin position="1"/>
        <end position="404"/>
    </location>
</feature>
<feature type="region of interest" description="Disordered" evidence="1">
    <location>
        <begin position="86"/>
        <end position="107"/>
    </location>
</feature>
<feature type="region of interest" description="Disordered" evidence="1">
    <location>
        <begin position="160"/>
        <end position="231"/>
    </location>
</feature>
<feature type="region of interest" description="Disordered" evidence="1">
    <location>
        <begin position="308"/>
        <end position="327"/>
    </location>
</feature>
<feature type="compositionally biased region" description="Pro residues" evidence="1">
    <location>
        <begin position="177"/>
        <end position="194"/>
    </location>
</feature>
<feature type="compositionally biased region" description="Low complexity" evidence="1">
    <location>
        <begin position="195"/>
        <end position="231"/>
    </location>
</feature>
<feature type="compositionally biased region" description="Acidic residues" evidence="1">
    <location>
        <begin position="308"/>
        <end position="318"/>
    </location>
</feature>
<feature type="splice variant" id="VSP_033726" description="In isoform 2." evidence="3">
    <original>PGAAPPAAAASPPASPAPASSPGFYR</original>
    <variation>RSPPASAPASRTSARTRPRTRPTSQT</variation>
    <location>
        <begin position="212"/>
        <end position="237"/>
    </location>
</feature>
<feature type="splice variant" id="VSP_033727" description="In isoform 2." evidence="3">
    <location>
        <begin position="238"/>
        <end position="404"/>
    </location>
</feature>
<feature type="sequence variant" id="VAR_043450" description="In dbSNP:rs184457." evidence="2">
    <original>P</original>
    <variation>S</variation>
    <location>
        <position position="105"/>
    </location>
</feature>
<organism>
    <name type="scientific">Homo sapiens</name>
    <name type="common">Human</name>
    <dbReference type="NCBI Taxonomy" id="9606"/>
    <lineage>
        <taxon>Eukaryota</taxon>
        <taxon>Metazoa</taxon>
        <taxon>Chordata</taxon>
        <taxon>Craniata</taxon>
        <taxon>Vertebrata</taxon>
        <taxon>Euteleostomi</taxon>
        <taxon>Mammalia</taxon>
        <taxon>Eutheria</taxon>
        <taxon>Euarchontoglires</taxon>
        <taxon>Primates</taxon>
        <taxon>Haplorrhini</taxon>
        <taxon>Catarrhini</taxon>
        <taxon>Hominidae</taxon>
        <taxon>Homo</taxon>
    </lineage>
</organism>
<evidence type="ECO:0000256" key="1">
    <source>
        <dbReference type="SAM" id="MobiDB-lite"/>
    </source>
</evidence>
<evidence type="ECO:0000269" key="2">
    <source>
    </source>
</evidence>
<evidence type="ECO:0000305" key="3"/>
<name>IER5L_HUMAN</name>
<reference key="1">
    <citation type="journal article" date="2004" name="Nature">
        <title>DNA sequence and analysis of human chromosome 9.</title>
        <authorList>
            <person name="Humphray S.J."/>
            <person name="Oliver K."/>
            <person name="Hunt A.R."/>
            <person name="Plumb R.W."/>
            <person name="Loveland J.E."/>
            <person name="Howe K.L."/>
            <person name="Andrews T.D."/>
            <person name="Searle S."/>
            <person name="Hunt S.E."/>
            <person name="Scott C.E."/>
            <person name="Jones M.C."/>
            <person name="Ainscough R."/>
            <person name="Almeida J.P."/>
            <person name="Ambrose K.D."/>
            <person name="Ashwell R.I.S."/>
            <person name="Babbage A.K."/>
            <person name="Babbage S."/>
            <person name="Bagguley C.L."/>
            <person name="Bailey J."/>
            <person name="Banerjee R."/>
            <person name="Barker D.J."/>
            <person name="Barlow K.F."/>
            <person name="Bates K."/>
            <person name="Beasley H."/>
            <person name="Beasley O."/>
            <person name="Bird C.P."/>
            <person name="Bray-Allen S."/>
            <person name="Brown A.J."/>
            <person name="Brown J.Y."/>
            <person name="Burford D."/>
            <person name="Burrill W."/>
            <person name="Burton J."/>
            <person name="Carder C."/>
            <person name="Carter N.P."/>
            <person name="Chapman J.C."/>
            <person name="Chen Y."/>
            <person name="Clarke G."/>
            <person name="Clark S.Y."/>
            <person name="Clee C.M."/>
            <person name="Clegg S."/>
            <person name="Collier R.E."/>
            <person name="Corby N."/>
            <person name="Crosier M."/>
            <person name="Cummings A.T."/>
            <person name="Davies J."/>
            <person name="Dhami P."/>
            <person name="Dunn M."/>
            <person name="Dutta I."/>
            <person name="Dyer L.W."/>
            <person name="Earthrowl M.E."/>
            <person name="Faulkner L."/>
            <person name="Fleming C.J."/>
            <person name="Frankish A."/>
            <person name="Frankland J.A."/>
            <person name="French L."/>
            <person name="Fricker D.G."/>
            <person name="Garner P."/>
            <person name="Garnett J."/>
            <person name="Ghori J."/>
            <person name="Gilbert J.G.R."/>
            <person name="Glison C."/>
            <person name="Grafham D.V."/>
            <person name="Gribble S."/>
            <person name="Griffiths C."/>
            <person name="Griffiths-Jones S."/>
            <person name="Grocock R."/>
            <person name="Guy J."/>
            <person name="Hall R.E."/>
            <person name="Hammond S."/>
            <person name="Harley J.L."/>
            <person name="Harrison E.S.I."/>
            <person name="Hart E.A."/>
            <person name="Heath P.D."/>
            <person name="Henderson C.D."/>
            <person name="Hopkins B.L."/>
            <person name="Howard P.J."/>
            <person name="Howden P.J."/>
            <person name="Huckle E."/>
            <person name="Johnson C."/>
            <person name="Johnson D."/>
            <person name="Joy A.A."/>
            <person name="Kay M."/>
            <person name="Keenan S."/>
            <person name="Kershaw J.K."/>
            <person name="Kimberley A.M."/>
            <person name="King A."/>
            <person name="Knights A."/>
            <person name="Laird G.K."/>
            <person name="Langford C."/>
            <person name="Lawlor S."/>
            <person name="Leongamornlert D.A."/>
            <person name="Leversha M."/>
            <person name="Lloyd C."/>
            <person name="Lloyd D.M."/>
            <person name="Lovell J."/>
            <person name="Martin S."/>
            <person name="Mashreghi-Mohammadi M."/>
            <person name="Matthews L."/>
            <person name="McLaren S."/>
            <person name="McLay K.E."/>
            <person name="McMurray A."/>
            <person name="Milne S."/>
            <person name="Nickerson T."/>
            <person name="Nisbett J."/>
            <person name="Nordsiek G."/>
            <person name="Pearce A.V."/>
            <person name="Peck A.I."/>
            <person name="Porter K.M."/>
            <person name="Pandian R."/>
            <person name="Pelan S."/>
            <person name="Phillimore B."/>
            <person name="Povey S."/>
            <person name="Ramsey Y."/>
            <person name="Rand V."/>
            <person name="Scharfe M."/>
            <person name="Sehra H.K."/>
            <person name="Shownkeen R."/>
            <person name="Sims S.K."/>
            <person name="Skuce C.D."/>
            <person name="Smith M."/>
            <person name="Steward C.A."/>
            <person name="Swarbreck D."/>
            <person name="Sycamore N."/>
            <person name="Tester J."/>
            <person name="Thorpe A."/>
            <person name="Tracey A."/>
            <person name="Tromans A."/>
            <person name="Thomas D.W."/>
            <person name="Wall M."/>
            <person name="Wallis J.M."/>
            <person name="West A.P."/>
            <person name="Whitehead S.L."/>
            <person name="Willey D.L."/>
            <person name="Williams S.A."/>
            <person name="Wilming L."/>
            <person name="Wray P.W."/>
            <person name="Young L."/>
            <person name="Ashurst J.L."/>
            <person name="Coulson A."/>
            <person name="Blocker H."/>
            <person name="Durbin R.M."/>
            <person name="Sulston J.E."/>
            <person name="Hubbard T."/>
            <person name="Jackson M.J."/>
            <person name="Bentley D.R."/>
            <person name="Beck S."/>
            <person name="Rogers J."/>
            <person name="Dunham I."/>
        </authorList>
    </citation>
    <scope>NUCLEOTIDE SEQUENCE [LARGE SCALE GENOMIC DNA]</scope>
</reference>
<reference key="2">
    <citation type="submission" date="2005-07" db="EMBL/GenBank/DDBJ databases">
        <authorList>
            <person name="Mural R.J."/>
            <person name="Istrail S."/>
            <person name="Sutton G.G."/>
            <person name="Florea L."/>
            <person name="Halpern A.L."/>
            <person name="Mobarry C.M."/>
            <person name="Lippert R."/>
            <person name="Walenz B."/>
            <person name="Shatkay H."/>
            <person name="Dew I."/>
            <person name="Miller J.R."/>
            <person name="Flanigan M.J."/>
            <person name="Edwards N.J."/>
            <person name="Bolanos R."/>
            <person name="Fasulo D."/>
            <person name="Halldorsson B.V."/>
            <person name="Hannenhalli S."/>
            <person name="Turner R."/>
            <person name="Yooseph S."/>
            <person name="Lu F."/>
            <person name="Nusskern D.R."/>
            <person name="Shue B.C."/>
            <person name="Zheng X.H."/>
            <person name="Zhong F."/>
            <person name="Delcher A.L."/>
            <person name="Huson D.H."/>
            <person name="Kravitz S.A."/>
            <person name="Mouchard L."/>
            <person name="Reinert K."/>
            <person name="Remington K.A."/>
            <person name="Clark A.G."/>
            <person name="Waterman M.S."/>
            <person name="Eichler E.E."/>
            <person name="Adams M.D."/>
            <person name="Hunkapiller M.W."/>
            <person name="Myers E.W."/>
            <person name="Venter J.C."/>
        </authorList>
    </citation>
    <scope>NUCLEOTIDE SEQUENCE [LARGE SCALE GENOMIC DNA]</scope>
</reference>
<reference key="3">
    <citation type="journal article" date="2004" name="Genome Res.">
        <title>The status, quality, and expansion of the NIH full-length cDNA project: the Mammalian Gene Collection (MGC).</title>
        <authorList>
            <consortium name="The MGC Project Team"/>
        </authorList>
    </citation>
    <scope>NUCLEOTIDE SEQUENCE [LARGE SCALE MRNA]</scope>
    <scope>VARIANT SER-105</scope>
    <source>
        <tissue>Uterus</tissue>
    </source>
</reference>
<gene>
    <name type="primary">IER5L</name>
</gene>
<keyword id="KW-0025">Alternative splicing</keyword>
<keyword id="KW-1267">Proteomics identification</keyword>
<keyword id="KW-1185">Reference proteome</keyword>